<name>VEMP_CVBEN</name>
<organism>
    <name type="scientific">Bovine coronavirus (strain 98TXSF-110-ENT)</name>
    <name type="common">BCoV-ENT</name>
    <name type="synonym">BCV</name>
    <dbReference type="NCBI Taxonomy" id="233262"/>
    <lineage>
        <taxon>Viruses</taxon>
        <taxon>Riboviria</taxon>
        <taxon>Orthornavirae</taxon>
        <taxon>Pisuviricota</taxon>
        <taxon>Pisoniviricetes</taxon>
        <taxon>Nidovirales</taxon>
        <taxon>Cornidovirineae</taxon>
        <taxon>Coronaviridae</taxon>
        <taxon>Orthocoronavirinae</taxon>
        <taxon>Betacoronavirus</taxon>
        <taxon>Embecovirus</taxon>
        <taxon>Betacoronavirus 1</taxon>
    </lineage>
</organism>
<proteinExistence type="inferred from homology"/>
<protein>
    <recommendedName>
        <fullName evidence="1">Envelope small membrane protein</fullName>
        <shortName evidence="1">E protein</shortName>
        <shortName evidence="1">sM protein</shortName>
    </recommendedName>
</protein>
<gene>
    <name evidence="1" type="primary">E</name>
    <name type="synonym">sM</name>
    <name type="ORF">5b</name>
</gene>
<sequence length="84" mass="9584">MFMADAYFADTVWYVGQIIFIVAICLLVIIVVVAFLATFKLCIQLCGMCNTLVLSPSIYVFNRGRQFYEFYNDVKPPVLDVDDV</sequence>
<organismHost>
    <name type="scientific">Bos taurus</name>
    <name type="common">Bovine</name>
    <dbReference type="NCBI Taxonomy" id="9913"/>
</organismHost>
<dbReference type="EMBL" id="AF391541">
    <property type="protein sequence ID" value="AAK83360.1"/>
    <property type="molecule type" value="Genomic_RNA"/>
</dbReference>
<dbReference type="RefSeq" id="NP_150081.1">
    <property type="nucleotide sequence ID" value="NC_003045.1"/>
</dbReference>
<dbReference type="GeneID" id="921685"/>
<dbReference type="KEGG" id="vg:921685"/>
<dbReference type="Proteomes" id="UP000008570">
    <property type="component" value="Segment"/>
</dbReference>
<dbReference type="GO" id="GO:0044178">
    <property type="term" value="C:host cell Golgi membrane"/>
    <property type="evidence" value="ECO:0007669"/>
    <property type="project" value="UniProtKB-SubCell"/>
</dbReference>
<dbReference type="GO" id="GO:0016020">
    <property type="term" value="C:membrane"/>
    <property type="evidence" value="ECO:0007669"/>
    <property type="project" value="UniProtKB-UniRule"/>
</dbReference>
<dbReference type="GO" id="GO:0140975">
    <property type="term" value="P:disruption of cellular anatomical structure in another organism"/>
    <property type="evidence" value="ECO:0007669"/>
    <property type="project" value="UniProtKB-UniRule"/>
</dbReference>
<dbReference type="GO" id="GO:0046760">
    <property type="term" value="P:viral budding from Golgi membrane"/>
    <property type="evidence" value="ECO:0007669"/>
    <property type="project" value="UniProtKB-UniRule"/>
</dbReference>
<dbReference type="CDD" id="cd21532">
    <property type="entry name" value="HKU1-CoV-like_E"/>
    <property type="match status" value="1"/>
</dbReference>
<dbReference type="HAMAP" id="MF_04204">
    <property type="entry name" value="BETA_CORONA_E"/>
    <property type="match status" value="1"/>
</dbReference>
<dbReference type="InterPro" id="IPR043506">
    <property type="entry name" value="E_protein_bCoV"/>
</dbReference>
<dbReference type="InterPro" id="IPR003873">
    <property type="entry name" value="E_protein_CoV"/>
</dbReference>
<dbReference type="Pfam" id="PF02723">
    <property type="entry name" value="CoV_E"/>
    <property type="match status" value="1"/>
</dbReference>
<dbReference type="PROSITE" id="PS51926">
    <property type="entry name" value="COV_E"/>
    <property type="match status" value="1"/>
</dbReference>
<reference key="1">
    <citation type="journal article" date="2001" name="J. Gen. Virol.">
        <title>Comparison of genomic and predicted amino acid sequences of respiratory and enteric bovine coronaviruses isolated from the same animal with fatal shipping pneumonia.</title>
        <authorList>
            <person name="Chouljenko V.N."/>
            <person name="Lin X.Q."/>
            <person name="Storz J."/>
            <person name="Kousoulas K.G."/>
            <person name="Gorbalenya A.E."/>
        </authorList>
    </citation>
    <scope>NUCLEOTIDE SEQUENCE [GENOMIC RNA]</scope>
</reference>
<keyword id="KW-0053">Apoptosis</keyword>
<keyword id="KW-1040">Host Golgi apparatus</keyword>
<keyword id="KW-1043">Host membrane</keyword>
<keyword id="KW-0472">Membrane</keyword>
<keyword id="KW-0812">Transmembrane</keyword>
<keyword id="KW-1133">Transmembrane helix</keyword>
<evidence type="ECO:0000255" key="1">
    <source>
        <dbReference type="HAMAP-Rule" id="MF_04204"/>
    </source>
</evidence>
<comment type="function">
    <text evidence="1">Plays a central role in virus morphogenesis and assembly. Acts as a viroporin and self-assembles in host membranes forming pentameric protein-lipid pores that allow ion transport. Also plays a role in the induction of apoptosis.</text>
</comment>
<comment type="subunit">
    <text evidence="1">Homopentamer. Interacts with membrane protein M in the budding compartment of the host cell, which is located between endoplasmic reticulum and the Golgi complex. Interacts with Nucleoprotein.</text>
</comment>
<comment type="subcellular location">
    <subcellularLocation>
        <location evidence="1">Host Golgi apparatus membrane</location>
        <topology evidence="1">Single-pass type III membrane protein</topology>
    </subcellularLocation>
    <text evidence="1">The cytoplasmic tail functions as a Golgi complex-targeting signal.</text>
</comment>
<comment type="similarity">
    <text evidence="1">Belongs to the betacoronaviruses E protein family.</text>
</comment>
<accession>P0C2Q1</accession>
<accession>Q77H74</accession>
<accession>Q77WX9</accession>
<feature type="chain" id="PRO_0000283967" description="Envelope small membrane protein">
    <location>
        <begin position="1"/>
        <end position="84"/>
    </location>
</feature>
<feature type="topological domain" description="Virion surface" evidence="1">
    <location>
        <begin position="1"/>
        <end position="18"/>
    </location>
</feature>
<feature type="transmembrane region" description="Helical" evidence="1">
    <location>
        <begin position="19"/>
        <end position="39"/>
    </location>
</feature>
<feature type="topological domain" description="Intravirion" evidence="1">
    <location>
        <begin position="40"/>
        <end position="80"/>
    </location>
</feature>